<gene>
    <name evidence="1" type="primary">argH</name>
    <name type="ordered locus">LMOf2365_2123</name>
</gene>
<comment type="catalytic activity">
    <reaction evidence="1">
        <text>2-(N(omega)-L-arginino)succinate = fumarate + L-arginine</text>
        <dbReference type="Rhea" id="RHEA:24020"/>
        <dbReference type="ChEBI" id="CHEBI:29806"/>
        <dbReference type="ChEBI" id="CHEBI:32682"/>
        <dbReference type="ChEBI" id="CHEBI:57472"/>
        <dbReference type="EC" id="4.3.2.1"/>
    </reaction>
</comment>
<comment type="pathway">
    <text evidence="1">Amino-acid biosynthesis; L-arginine biosynthesis; L-arginine from L-ornithine and carbamoyl phosphate: step 3/3.</text>
</comment>
<comment type="subcellular location">
    <subcellularLocation>
        <location evidence="1">Cytoplasm</location>
    </subcellularLocation>
</comment>
<comment type="similarity">
    <text evidence="1">Belongs to the lyase 1 family. Argininosuccinate lyase subfamily.</text>
</comment>
<keyword id="KW-0028">Amino-acid biosynthesis</keyword>
<keyword id="KW-0055">Arginine biosynthesis</keyword>
<keyword id="KW-0963">Cytoplasm</keyword>
<keyword id="KW-0456">Lyase</keyword>
<name>ARLY_LISMF</name>
<sequence length="456" mass="50780">MEKLWGGRFQGKSEAWIDDFGASISFDQKMAKEDLAGSLAHVAMLSKCGIIPASEAAEITAGLKILQEKLALGELEFSTVNEDIHLNIEKLLHEEIGPVAGKLHTARSRNDQVATDMHLYLKQAVAEIIQSLKHLRVVLVQKAEANVETIMPGYTHLQHAQPISFAHHLLAYFGMFTRDLERLEESVKRIDISPLGSAALAGTTFPIDRAYSAELLGFSAVYENSLDGVSDRDFIIEFLSNSSILMMHLSRFCEELILWTSHEFQFVELTDAFSTGSSIMPQKKNPDMAELIRGKTGRVYGNLFGMLTVLKGLPLAYNKDLQEDKEGMFDTLETVQTCLDIFAGMIETMKINTEIMEESTQKDFSNATELADYLAKKGVPFREAHEIVGKLVLECTQNGIYLQDVALSHYQEINPLIDDDIYVVLSSKTAVQKRNSYGGTGFDQIKVALENAKKTL</sequence>
<evidence type="ECO:0000255" key="1">
    <source>
        <dbReference type="HAMAP-Rule" id="MF_00006"/>
    </source>
</evidence>
<proteinExistence type="inferred from homology"/>
<dbReference type="EC" id="4.3.2.1" evidence="1"/>
<dbReference type="EMBL" id="AE017262">
    <property type="protein sequence ID" value="AAT04892.1"/>
    <property type="molecule type" value="Genomic_DNA"/>
</dbReference>
<dbReference type="RefSeq" id="WP_010959005.1">
    <property type="nucleotide sequence ID" value="NC_002973.6"/>
</dbReference>
<dbReference type="SMR" id="Q71XS3"/>
<dbReference type="KEGG" id="lmf:LMOf2365_2123"/>
<dbReference type="HOGENOM" id="CLU_027272_2_3_9"/>
<dbReference type="UniPathway" id="UPA00068">
    <property type="reaction ID" value="UER00114"/>
</dbReference>
<dbReference type="GO" id="GO:0005829">
    <property type="term" value="C:cytosol"/>
    <property type="evidence" value="ECO:0007669"/>
    <property type="project" value="TreeGrafter"/>
</dbReference>
<dbReference type="GO" id="GO:0004056">
    <property type="term" value="F:argininosuccinate lyase activity"/>
    <property type="evidence" value="ECO:0007669"/>
    <property type="project" value="UniProtKB-UniRule"/>
</dbReference>
<dbReference type="GO" id="GO:0042450">
    <property type="term" value="P:arginine biosynthetic process via ornithine"/>
    <property type="evidence" value="ECO:0007669"/>
    <property type="project" value="InterPro"/>
</dbReference>
<dbReference type="GO" id="GO:0006526">
    <property type="term" value="P:L-arginine biosynthetic process"/>
    <property type="evidence" value="ECO:0007669"/>
    <property type="project" value="UniProtKB-UniRule"/>
</dbReference>
<dbReference type="CDD" id="cd01359">
    <property type="entry name" value="Argininosuccinate_lyase"/>
    <property type="match status" value="1"/>
</dbReference>
<dbReference type="FunFam" id="1.10.275.10:FF:000002">
    <property type="entry name" value="Argininosuccinate lyase"/>
    <property type="match status" value="1"/>
</dbReference>
<dbReference type="FunFam" id="1.10.40.30:FF:000001">
    <property type="entry name" value="Argininosuccinate lyase"/>
    <property type="match status" value="1"/>
</dbReference>
<dbReference type="FunFam" id="1.20.200.10:FF:000006">
    <property type="entry name" value="Argininosuccinate lyase"/>
    <property type="match status" value="1"/>
</dbReference>
<dbReference type="Gene3D" id="1.10.40.30">
    <property type="entry name" value="Fumarase/aspartase (C-terminal domain)"/>
    <property type="match status" value="1"/>
</dbReference>
<dbReference type="Gene3D" id="1.20.200.10">
    <property type="entry name" value="Fumarase/aspartase (Central domain)"/>
    <property type="match status" value="1"/>
</dbReference>
<dbReference type="Gene3D" id="1.10.275.10">
    <property type="entry name" value="Fumarase/aspartase (N-terminal domain)"/>
    <property type="match status" value="1"/>
</dbReference>
<dbReference type="HAMAP" id="MF_00006">
    <property type="entry name" value="Arg_succ_lyase"/>
    <property type="match status" value="1"/>
</dbReference>
<dbReference type="InterPro" id="IPR029419">
    <property type="entry name" value="Arg_succ_lyase_C"/>
</dbReference>
<dbReference type="InterPro" id="IPR009049">
    <property type="entry name" value="Argininosuccinate_lyase"/>
</dbReference>
<dbReference type="InterPro" id="IPR024083">
    <property type="entry name" value="Fumarase/histidase_N"/>
</dbReference>
<dbReference type="InterPro" id="IPR020557">
    <property type="entry name" value="Fumarate_lyase_CS"/>
</dbReference>
<dbReference type="InterPro" id="IPR000362">
    <property type="entry name" value="Fumarate_lyase_fam"/>
</dbReference>
<dbReference type="InterPro" id="IPR022761">
    <property type="entry name" value="Fumarate_lyase_N"/>
</dbReference>
<dbReference type="InterPro" id="IPR008948">
    <property type="entry name" value="L-Aspartase-like"/>
</dbReference>
<dbReference type="NCBIfam" id="TIGR00838">
    <property type="entry name" value="argH"/>
    <property type="match status" value="1"/>
</dbReference>
<dbReference type="PANTHER" id="PTHR43814">
    <property type="entry name" value="ARGININOSUCCINATE LYASE"/>
    <property type="match status" value="1"/>
</dbReference>
<dbReference type="PANTHER" id="PTHR43814:SF1">
    <property type="entry name" value="ARGININOSUCCINATE LYASE"/>
    <property type="match status" value="1"/>
</dbReference>
<dbReference type="Pfam" id="PF14698">
    <property type="entry name" value="ASL_C2"/>
    <property type="match status" value="1"/>
</dbReference>
<dbReference type="Pfam" id="PF00206">
    <property type="entry name" value="Lyase_1"/>
    <property type="match status" value="1"/>
</dbReference>
<dbReference type="PRINTS" id="PR00145">
    <property type="entry name" value="ARGSUCLYASE"/>
</dbReference>
<dbReference type="PRINTS" id="PR00149">
    <property type="entry name" value="FUMRATELYASE"/>
</dbReference>
<dbReference type="SUPFAM" id="SSF48557">
    <property type="entry name" value="L-aspartase-like"/>
    <property type="match status" value="1"/>
</dbReference>
<dbReference type="PROSITE" id="PS00163">
    <property type="entry name" value="FUMARATE_LYASES"/>
    <property type="match status" value="1"/>
</dbReference>
<protein>
    <recommendedName>
        <fullName evidence="1">Argininosuccinate lyase</fullName>
        <shortName evidence="1">ASAL</shortName>
        <ecNumber evidence="1">4.3.2.1</ecNumber>
    </recommendedName>
    <alternativeName>
        <fullName evidence="1">Arginosuccinase</fullName>
    </alternativeName>
</protein>
<reference key="1">
    <citation type="journal article" date="2004" name="Nucleic Acids Res.">
        <title>Whole genome comparisons of serotype 4b and 1/2a strains of the food-borne pathogen Listeria monocytogenes reveal new insights into the core genome components of this species.</title>
        <authorList>
            <person name="Nelson K.E."/>
            <person name="Fouts D.E."/>
            <person name="Mongodin E.F."/>
            <person name="Ravel J."/>
            <person name="DeBoy R.T."/>
            <person name="Kolonay J.F."/>
            <person name="Rasko D.A."/>
            <person name="Angiuoli S.V."/>
            <person name="Gill S.R."/>
            <person name="Paulsen I.T."/>
            <person name="Peterson J.D."/>
            <person name="White O."/>
            <person name="Nelson W.C."/>
            <person name="Nierman W.C."/>
            <person name="Beanan M.J."/>
            <person name="Brinkac L.M."/>
            <person name="Daugherty S.C."/>
            <person name="Dodson R.J."/>
            <person name="Durkin A.S."/>
            <person name="Madupu R."/>
            <person name="Haft D.H."/>
            <person name="Selengut J."/>
            <person name="Van Aken S.E."/>
            <person name="Khouri H.M."/>
            <person name="Fedorova N."/>
            <person name="Forberger H.A."/>
            <person name="Tran B."/>
            <person name="Kathariou S."/>
            <person name="Wonderling L.D."/>
            <person name="Uhlich G.A."/>
            <person name="Bayles D.O."/>
            <person name="Luchansky J.B."/>
            <person name="Fraser C.M."/>
        </authorList>
    </citation>
    <scope>NUCLEOTIDE SEQUENCE [LARGE SCALE GENOMIC DNA]</scope>
    <source>
        <strain>F2365</strain>
    </source>
</reference>
<feature type="chain" id="PRO_0000137786" description="Argininosuccinate lyase">
    <location>
        <begin position="1"/>
        <end position="456"/>
    </location>
</feature>
<organism>
    <name type="scientific">Listeria monocytogenes serotype 4b (strain F2365)</name>
    <dbReference type="NCBI Taxonomy" id="265669"/>
    <lineage>
        <taxon>Bacteria</taxon>
        <taxon>Bacillati</taxon>
        <taxon>Bacillota</taxon>
        <taxon>Bacilli</taxon>
        <taxon>Bacillales</taxon>
        <taxon>Listeriaceae</taxon>
        <taxon>Listeria</taxon>
    </lineage>
</organism>
<accession>Q71XS3</accession>